<proteinExistence type="inferred from homology"/>
<gene>
    <name evidence="1" type="primary">pyrE</name>
    <name type="ordered locus">CHY_1495</name>
</gene>
<protein>
    <recommendedName>
        <fullName evidence="1">Orotate phosphoribosyltransferase</fullName>
        <shortName evidence="1">OPRT</shortName>
        <shortName evidence="1">OPRTase</shortName>
        <ecNumber evidence="1">2.4.2.10</ecNumber>
    </recommendedName>
</protein>
<organism>
    <name type="scientific">Carboxydothermus hydrogenoformans (strain ATCC BAA-161 / DSM 6008 / Z-2901)</name>
    <dbReference type="NCBI Taxonomy" id="246194"/>
    <lineage>
        <taxon>Bacteria</taxon>
        <taxon>Bacillati</taxon>
        <taxon>Bacillota</taxon>
        <taxon>Clostridia</taxon>
        <taxon>Thermoanaerobacterales</taxon>
        <taxon>Thermoanaerobacteraceae</taxon>
        <taxon>Carboxydothermus</taxon>
    </lineage>
</organism>
<comment type="function">
    <text evidence="1">Catalyzes the transfer of a ribosyl phosphate group from 5-phosphoribose 1-diphosphate to orotate, leading to the formation of orotidine monophosphate (OMP).</text>
</comment>
<comment type="catalytic activity">
    <reaction evidence="1">
        <text>orotidine 5'-phosphate + diphosphate = orotate + 5-phospho-alpha-D-ribose 1-diphosphate</text>
        <dbReference type="Rhea" id="RHEA:10380"/>
        <dbReference type="ChEBI" id="CHEBI:30839"/>
        <dbReference type="ChEBI" id="CHEBI:33019"/>
        <dbReference type="ChEBI" id="CHEBI:57538"/>
        <dbReference type="ChEBI" id="CHEBI:58017"/>
        <dbReference type="EC" id="2.4.2.10"/>
    </reaction>
</comment>
<comment type="cofactor">
    <cofactor evidence="1">
        <name>Mg(2+)</name>
        <dbReference type="ChEBI" id="CHEBI:18420"/>
    </cofactor>
</comment>
<comment type="pathway">
    <text evidence="1">Pyrimidine metabolism; UMP biosynthesis via de novo pathway; UMP from orotate: step 1/2.</text>
</comment>
<comment type="subunit">
    <text evidence="1">Homodimer.</text>
</comment>
<comment type="similarity">
    <text evidence="1">Belongs to the purine/pyrimidine phosphoribosyltransferase family. PyrE subfamily.</text>
</comment>
<evidence type="ECO:0000255" key="1">
    <source>
        <dbReference type="HAMAP-Rule" id="MF_01208"/>
    </source>
</evidence>
<dbReference type="EC" id="2.4.2.10" evidence="1"/>
<dbReference type="EMBL" id="CP000141">
    <property type="protein sequence ID" value="ABB14177.1"/>
    <property type="molecule type" value="Genomic_DNA"/>
</dbReference>
<dbReference type="SMR" id="Q3AC07"/>
<dbReference type="FunCoup" id="Q3AC07">
    <property type="interactions" value="180"/>
</dbReference>
<dbReference type="STRING" id="246194.CHY_1495"/>
<dbReference type="KEGG" id="chy:CHY_1495"/>
<dbReference type="eggNOG" id="COG0461">
    <property type="taxonomic scope" value="Bacteria"/>
</dbReference>
<dbReference type="HOGENOM" id="CLU_074878_3_0_9"/>
<dbReference type="InParanoid" id="Q3AC07"/>
<dbReference type="UniPathway" id="UPA00070">
    <property type="reaction ID" value="UER00119"/>
</dbReference>
<dbReference type="Proteomes" id="UP000002706">
    <property type="component" value="Chromosome"/>
</dbReference>
<dbReference type="GO" id="GO:0000287">
    <property type="term" value="F:magnesium ion binding"/>
    <property type="evidence" value="ECO:0007669"/>
    <property type="project" value="UniProtKB-UniRule"/>
</dbReference>
<dbReference type="GO" id="GO:0004588">
    <property type="term" value="F:orotate phosphoribosyltransferase activity"/>
    <property type="evidence" value="ECO:0007669"/>
    <property type="project" value="UniProtKB-UniRule"/>
</dbReference>
<dbReference type="GO" id="GO:0044205">
    <property type="term" value="P:'de novo' UMP biosynthetic process"/>
    <property type="evidence" value="ECO:0007669"/>
    <property type="project" value="UniProtKB-UniRule"/>
</dbReference>
<dbReference type="GO" id="GO:0019856">
    <property type="term" value="P:pyrimidine nucleobase biosynthetic process"/>
    <property type="evidence" value="ECO:0007669"/>
    <property type="project" value="InterPro"/>
</dbReference>
<dbReference type="CDD" id="cd06223">
    <property type="entry name" value="PRTases_typeI"/>
    <property type="match status" value="1"/>
</dbReference>
<dbReference type="Gene3D" id="3.40.50.2020">
    <property type="match status" value="1"/>
</dbReference>
<dbReference type="HAMAP" id="MF_01208">
    <property type="entry name" value="PyrE"/>
    <property type="match status" value="1"/>
</dbReference>
<dbReference type="InterPro" id="IPR023031">
    <property type="entry name" value="OPRT"/>
</dbReference>
<dbReference type="InterPro" id="IPR006273">
    <property type="entry name" value="Orotate_PRibTrfase_bac"/>
</dbReference>
<dbReference type="InterPro" id="IPR000836">
    <property type="entry name" value="PRibTrfase_dom"/>
</dbReference>
<dbReference type="InterPro" id="IPR029057">
    <property type="entry name" value="PRTase-like"/>
</dbReference>
<dbReference type="NCBIfam" id="TIGR01367">
    <property type="entry name" value="pyrE_Therm"/>
    <property type="match status" value="1"/>
</dbReference>
<dbReference type="PANTHER" id="PTHR19278">
    <property type="entry name" value="OROTATE PHOSPHORIBOSYLTRANSFERASE"/>
    <property type="match status" value="1"/>
</dbReference>
<dbReference type="PANTHER" id="PTHR19278:SF9">
    <property type="entry name" value="URIDINE 5'-MONOPHOSPHATE SYNTHASE"/>
    <property type="match status" value="1"/>
</dbReference>
<dbReference type="Pfam" id="PF00156">
    <property type="entry name" value="Pribosyltran"/>
    <property type="match status" value="1"/>
</dbReference>
<dbReference type="SUPFAM" id="SSF53271">
    <property type="entry name" value="PRTase-like"/>
    <property type="match status" value="1"/>
</dbReference>
<dbReference type="PROSITE" id="PS00103">
    <property type="entry name" value="PUR_PYR_PR_TRANSFER"/>
    <property type="match status" value="1"/>
</dbReference>
<keyword id="KW-0328">Glycosyltransferase</keyword>
<keyword id="KW-0460">Magnesium</keyword>
<keyword id="KW-0665">Pyrimidine biosynthesis</keyword>
<keyword id="KW-1185">Reference proteome</keyword>
<keyword id="KW-0808">Transferase</keyword>
<reference key="1">
    <citation type="journal article" date="2005" name="PLoS Genet.">
        <title>Life in hot carbon monoxide: the complete genome sequence of Carboxydothermus hydrogenoformans Z-2901.</title>
        <authorList>
            <person name="Wu M."/>
            <person name="Ren Q."/>
            <person name="Durkin A.S."/>
            <person name="Daugherty S.C."/>
            <person name="Brinkac L.M."/>
            <person name="Dodson R.J."/>
            <person name="Madupu R."/>
            <person name="Sullivan S.A."/>
            <person name="Kolonay J.F."/>
            <person name="Nelson W.C."/>
            <person name="Tallon L.J."/>
            <person name="Jones K.M."/>
            <person name="Ulrich L.E."/>
            <person name="Gonzalez J.M."/>
            <person name="Zhulin I.B."/>
            <person name="Robb F.T."/>
            <person name="Eisen J.A."/>
        </authorList>
    </citation>
    <scope>NUCLEOTIDE SEQUENCE [LARGE SCALE GENOMIC DNA]</scope>
    <source>
        <strain>ATCC BAA-161 / DSM 6008 / Z-2901</strain>
    </source>
</reference>
<name>PYRE_CARHZ</name>
<accession>Q3AC07</accession>
<sequence length="191" mass="20972">MFCMDLYKLFLEKKALLEGHFKLSSGLHSNKYFQCALLTAEPEIAEMLCETLAQKLRADKIEANLVIGPAIGGIILAYEMARALKVKAFFAEREEGQMRLRRGFTVKPDDKVIVVEDVVTTGGSTREVMDLVQSMGGEVVAVASLVDRSGGKVDFGVPFYPLLKVNVETYLPENCPLCAEGVPVVKPGSRK</sequence>
<feature type="chain" id="PRO_1000138770" description="Orotate phosphoribosyltransferase">
    <location>
        <begin position="1"/>
        <end position="191"/>
    </location>
</feature>
<feature type="binding site" evidence="1">
    <location>
        <begin position="116"/>
        <end position="124"/>
    </location>
    <ligand>
        <name>5-phospho-alpha-D-ribose 1-diphosphate</name>
        <dbReference type="ChEBI" id="CHEBI:58017"/>
    </ligand>
</feature>
<feature type="binding site" evidence="1">
    <location>
        <position position="120"/>
    </location>
    <ligand>
        <name>orotate</name>
        <dbReference type="ChEBI" id="CHEBI:30839"/>
    </ligand>
</feature>
<feature type="binding site" evidence="1">
    <location>
        <position position="148"/>
    </location>
    <ligand>
        <name>orotate</name>
        <dbReference type="ChEBI" id="CHEBI:30839"/>
    </ligand>
</feature>